<organism>
    <name type="scientific">Aspergillus flavus (strain ATCC 200026 / FGSC A1120 / IAM 13836 / NRRL 3357 / JCM 12722 / SRRC 167)</name>
    <dbReference type="NCBI Taxonomy" id="332952"/>
    <lineage>
        <taxon>Eukaryota</taxon>
        <taxon>Fungi</taxon>
        <taxon>Dikarya</taxon>
        <taxon>Ascomycota</taxon>
        <taxon>Pezizomycotina</taxon>
        <taxon>Eurotiomycetes</taxon>
        <taxon>Eurotiomycetidae</taxon>
        <taxon>Eurotiales</taxon>
        <taxon>Aspergillaceae</taxon>
        <taxon>Aspergillus</taxon>
        <taxon>Aspergillus subgen. Circumdati</taxon>
    </lineage>
</organism>
<sequence>MRIDCTVASLTALASGCQALSTRPYVPRGHSLSRRDDSAPIYRDASYCIDERVDDLLARMTIEEKAGQLFHTRLMDGPLDDEGSGNNAHNSTSNMIGEKHMTHFNLASDITNATETAEFINRIQELALQTRLGIPVTVSTDPRHSFTENVGTGFKAGVFSQWPESIGLAALRDPYVVRKFAEVAKEEYIAVGIRAALHPQVDLSTEPRWARISNTWGENSTLTSELLVEYIKGFQGDKLGPQSVKTVTKHFPGGGPVENGEDSHFAYGKNQTYPGNNLEEHLKPFKAAIAAGATEIMPYYSRPIGTEYEPVAFSFNKRIVTELLRNELGFEGIVLTDWGLITDGYIAGQYMPARAWGVENLTELERAARILDAGCDQFGGEERPELIVQLVQEGTVSEDRIDVSVRRLLREKFVLGLFDNPFVDPESAGRVVGNDYFVRLGREAQRRSYTLLSNNEDIVPLKKIEQSTKFYIEGFNASFIESWNYTVVDSPEEADYALLRYNAPYEPRPGGFEANMHAGSLAFNDTEKARQAKIYSTVPTIVDIVMDRPAVIPEIIEQAKAVFASYGSDSNAFLDVVFGVSAPEGKLPFDLPSSMEAVEAQMEDVPFDTRNPVFKFGHGLSYANPCASSSSKCS</sequence>
<proteinExistence type="inferred from homology"/>
<protein>
    <recommendedName>
        <fullName>Probable beta-glucosidase C</fullName>
        <ecNumber>3.2.1.21</ecNumber>
    </recommendedName>
    <alternativeName>
        <fullName>Beta-D-glucoside glucohydrolase C</fullName>
    </alternativeName>
    <alternativeName>
        <fullName>Cellobiase C</fullName>
    </alternativeName>
    <alternativeName>
        <fullName>Gentiobiase C</fullName>
    </alternativeName>
</protein>
<dbReference type="EC" id="3.2.1.21"/>
<dbReference type="EMBL" id="EQ963478">
    <property type="protein sequence ID" value="EED51050.1"/>
    <property type="molecule type" value="Genomic_DNA"/>
</dbReference>
<dbReference type="RefSeq" id="XP_002379826.1">
    <property type="nucleotide sequence ID" value="XM_002379785.1"/>
</dbReference>
<dbReference type="SMR" id="B8NGU6"/>
<dbReference type="STRING" id="332952.B8NGU6"/>
<dbReference type="GlyCosmos" id="B8NGU6">
    <property type="glycosylation" value="8 sites, No reported glycans"/>
</dbReference>
<dbReference type="EnsemblFungi" id="EED51050">
    <property type="protein sequence ID" value="EED51050"/>
    <property type="gene ID" value="AFLA_138140"/>
</dbReference>
<dbReference type="VEuPathDB" id="FungiDB:AFLA_006181"/>
<dbReference type="eggNOG" id="ENOG502QTBT">
    <property type="taxonomic scope" value="Eukaryota"/>
</dbReference>
<dbReference type="HOGENOM" id="CLU_004542_8_2_1"/>
<dbReference type="OMA" id="VKHWVGY"/>
<dbReference type="UniPathway" id="UPA00696"/>
<dbReference type="GO" id="GO:0005576">
    <property type="term" value="C:extracellular region"/>
    <property type="evidence" value="ECO:0007669"/>
    <property type="project" value="UniProtKB-SubCell"/>
</dbReference>
<dbReference type="GO" id="GO:0008422">
    <property type="term" value="F:beta-glucosidase activity"/>
    <property type="evidence" value="ECO:0007669"/>
    <property type="project" value="UniProtKB-EC"/>
</dbReference>
<dbReference type="GO" id="GO:0030245">
    <property type="term" value="P:cellulose catabolic process"/>
    <property type="evidence" value="ECO:0007669"/>
    <property type="project" value="UniProtKB-UniPathway"/>
</dbReference>
<dbReference type="Gene3D" id="3.40.50.1700">
    <property type="entry name" value="Glycoside hydrolase family 3 C-terminal domain"/>
    <property type="match status" value="1"/>
</dbReference>
<dbReference type="Gene3D" id="3.20.20.300">
    <property type="entry name" value="Glycoside hydrolase, family 3, N-terminal domain"/>
    <property type="match status" value="1"/>
</dbReference>
<dbReference type="InterPro" id="IPR051915">
    <property type="entry name" value="Cellulose_Degrad_GH3"/>
</dbReference>
<dbReference type="InterPro" id="IPR002772">
    <property type="entry name" value="Glyco_hydro_3_C"/>
</dbReference>
<dbReference type="InterPro" id="IPR036881">
    <property type="entry name" value="Glyco_hydro_3_C_sf"/>
</dbReference>
<dbReference type="InterPro" id="IPR001764">
    <property type="entry name" value="Glyco_hydro_3_N"/>
</dbReference>
<dbReference type="InterPro" id="IPR036962">
    <property type="entry name" value="Glyco_hydro_3_N_sf"/>
</dbReference>
<dbReference type="InterPro" id="IPR017853">
    <property type="entry name" value="Glycoside_hydrolase_SF"/>
</dbReference>
<dbReference type="PANTHER" id="PTHR30620:SF16">
    <property type="entry name" value="LYSOSOMAL BETA GLUCOSIDASE"/>
    <property type="match status" value="1"/>
</dbReference>
<dbReference type="PANTHER" id="PTHR30620">
    <property type="entry name" value="PERIPLASMIC BETA-GLUCOSIDASE-RELATED"/>
    <property type="match status" value="1"/>
</dbReference>
<dbReference type="Pfam" id="PF00933">
    <property type="entry name" value="Glyco_hydro_3"/>
    <property type="match status" value="1"/>
</dbReference>
<dbReference type="Pfam" id="PF01915">
    <property type="entry name" value="Glyco_hydro_3_C"/>
    <property type="match status" value="1"/>
</dbReference>
<dbReference type="PRINTS" id="PR00133">
    <property type="entry name" value="GLHYDRLASE3"/>
</dbReference>
<dbReference type="SUPFAM" id="SSF51445">
    <property type="entry name" value="(Trans)glycosidases"/>
    <property type="match status" value="1"/>
</dbReference>
<dbReference type="SUPFAM" id="SSF52279">
    <property type="entry name" value="Beta-D-glucan exohydrolase, C-terminal domain"/>
    <property type="match status" value="1"/>
</dbReference>
<comment type="function">
    <text evidence="1">Beta-glucosidases are one of a number of cellulolytic enzymes involved in the degradation of cellulosic biomass. Catalyzes the last step releasing glucose from the inhibitory cellobiose (By similarity).</text>
</comment>
<comment type="catalytic activity">
    <reaction>
        <text>Hydrolysis of terminal, non-reducing beta-D-glucosyl residues with release of beta-D-glucose.</text>
        <dbReference type="EC" id="3.2.1.21"/>
    </reaction>
</comment>
<comment type="pathway">
    <text>Glycan metabolism; cellulose degradation.</text>
</comment>
<comment type="subcellular location">
    <subcellularLocation>
        <location evidence="1">Secreted</location>
    </subcellularLocation>
</comment>
<comment type="similarity">
    <text evidence="3">Belongs to the glycosyl hydrolase 3 family.</text>
</comment>
<gene>
    <name type="primary">bglC</name>
    <name type="ORF">AFLA_138140</name>
</gene>
<reference key="1">
    <citation type="journal article" date="2015" name="Genome Announc.">
        <title>Genome sequence of Aspergillus flavus NRRL 3357, a strain that causes aflatoxin contamination of food and feed.</title>
        <authorList>
            <person name="Nierman W.C."/>
            <person name="Yu J."/>
            <person name="Fedorova-Abrams N.D."/>
            <person name="Losada L."/>
            <person name="Cleveland T.E."/>
            <person name="Bhatnagar D."/>
            <person name="Bennett J.W."/>
            <person name="Dean R."/>
            <person name="Payne G.A."/>
        </authorList>
    </citation>
    <scope>NUCLEOTIDE SEQUENCE [LARGE SCALE GENOMIC DNA]</scope>
    <source>
        <strain>ATCC 200026 / FGSC A1120 / IAM 13836 / NRRL 3357 / JCM 12722 / SRRC 167</strain>
    </source>
</reference>
<keyword id="KW-0119">Carbohydrate metabolism</keyword>
<keyword id="KW-0136">Cellulose degradation</keyword>
<keyword id="KW-0325">Glycoprotein</keyword>
<keyword id="KW-0326">Glycosidase</keyword>
<keyword id="KW-0378">Hydrolase</keyword>
<keyword id="KW-0624">Polysaccharide degradation</keyword>
<keyword id="KW-0964">Secreted</keyword>
<keyword id="KW-0732">Signal</keyword>
<feature type="signal peptide" evidence="2">
    <location>
        <begin position="1"/>
        <end position="19"/>
    </location>
</feature>
<feature type="chain" id="PRO_0000394103" description="Probable beta-glucosidase C">
    <location>
        <begin position="20"/>
        <end position="634"/>
    </location>
</feature>
<feature type="active site" evidence="1">
    <location>
        <position position="337"/>
    </location>
</feature>
<feature type="glycosylation site" description="N-linked (GlcNAc...) asparagine" evidence="2">
    <location>
        <position position="90"/>
    </location>
</feature>
<feature type="glycosylation site" description="N-linked (GlcNAc...) asparagine" evidence="2">
    <location>
        <position position="112"/>
    </location>
</feature>
<feature type="glycosylation site" description="N-linked (GlcNAc...) asparagine" evidence="2">
    <location>
        <position position="219"/>
    </location>
</feature>
<feature type="glycosylation site" description="N-linked (GlcNAc...) asparagine" evidence="2">
    <location>
        <position position="270"/>
    </location>
</feature>
<feature type="glycosylation site" description="N-linked (GlcNAc...) asparagine" evidence="2">
    <location>
        <position position="360"/>
    </location>
</feature>
<feature type="glycosylation site" description="N-linked (GlcNAc...) asparagine" evidence="2">
    <location>
        <position position="476"/>
    </location>
</feature>
<feature type="glycosylation site" description="N-linked (GlcNAc...) asparagine" evidence="2">
    <location>
        <position position="484"/>
    </location>
</feature>
<feature type="glycosylation site" description="N-linked (GlcNAc...) asparagine" evidence="2">
    <location>
        <position position="524"/>
    </location>
</feature>
<name>BGLC_ASPFN</name>
<accession>B8NGU6</accession>
<evidence type="ECO:0000250" key="1"/>
<evidence type="ECO:0000255" key="2"/>
<evidence type="ECO:0000305" key="3"/>